<name>SYC_SOLM1</name>
<proteinExistence type="inferred from homology"/>
<sequence length="485" mass="54044">MQLYNTMTRTKEPFVSRVPGKVAMYVCGITAYDLCHIGHARSSVVFDVLVRYLRHIGFDVTFVRNFTDVDDKIIKKANAEGTTSQEIAERYIATFYEDMDKLGILRPNAEPKATEYIGEMASLAQRLIDSGHAYRTPSGDVYFRVRSFAGYGKLSGRDVEDMRSGARVAPGEEKEDPLDFALWKASKPGEPVWESPFGPGRPGWHLECSAMSEKLLGMPIDIHGGGQDLIFPHHENEIAQSEAAIGGEFCRYWVHNGFVRINTEKMSKSLGNFITIRDIYARYLPEVLRFFLLSSQYRSPLDYSDQGLDEAEKGIKRIYAAKVQMEQALGRAKWSETKLPADVTEELSRHEEGFTAAMDDDLNTAQAMGHVFGLVRLAGRLMEDKTLAKSRETAEVLGRILADFGVWAEVLGVFGTDATAFLADLKACRLTRLGIDAARVDGLVAERQDARKAKDFARSDAIRDELASLGVTVMDTPTGPQWDIA</sequence>
<reference key="1">
    <citation type="journal article" date="2009" name="Genome Res.">
        <title>Whole genome sequence of Desulfovibrio magneticus strain RS-1 revealed common gene clusters in magnetotactic bacteria.</title>
        <authorList>
            <person name="Nakazawa H."/>
            <person name="Arakaki A."/>
            <person name="Narita-Yamada S."/>
            <person name="Yashiro I."/>
            <person name="Jinno K."/>
            <person name="Aoki N."/>
            <person name="Tsuruyama A."/>
            <person name="Okamura Y."/>
            <person name="Tanikawa S."/>
            <person name="Fujita N."/>
            <person name="Takeyama H."/>
            <person name="Matsunaga T."/>
        </authorList>
    </citation>
    <scope>NUCLEOTIDE SEQUENCE [LARGE SCALE GENOMIC DNA]</scope>
    <source>
        <strain>ATCC 700980 / DSM 13731 / RS-1</strain>
    </source>
</reference>
<keyword id="KW-0030">Aminoacyl-tRNA synthetase</keyword>
<keyword id="KW-0067">ATP-binding</keyword>
<keyword id="KW-0963">Cytoplasm</keyword>
<keyword id="KW-0436">Ligase</keyword>
<keyword id="KW-0479">Metal-binding</keyword>
<keyword id="KW-0547">Nucleotide-binding</keyword>
<keyword id="KW-0648">Protein biosynthesis</keyword>
<keyword id="KW-0862">Zinc</keyword>
<feature type="chain" id="PRO_1000202119" description="Cysteine--tRNA ligase">
    <location>
        <begin position="1"/>
        <end position="485"/>
    </location>
</feature>
<feature type="short sequence motif" description="'HIGH' region">
    <location>
        <begin position="29"/>
        <end position="39"/>
    </location>
</feature>
<feature type="short sequence motif" description="'KMSKS' region">
    <location>
        <begin position="265"/>
        <end position="269"/>
    </location>
</feature>
<feature type="binding site" evidence="1">
    <location>
        <position position="27"/>
    </location>
    <ligand>
        <name>Zn(2+)</name>
        <dbReference type="ChEBI" id="CHEBI:29105"/>
    </ligand>
</feature>
<feature type="binding site" evidence="1">
    <location>
        <position position="208"/>
    </location>
    <ligand>
        <name>Zn(2+)</name>
        <dbReference type="ChEBI" id="CHEBI:29105"/>
    </ligand>
</feature>
<feature type="binding site" evidence="1">
    <location>
        <position position="233"/>
    </location>
    <ligand>
        <name>Zn(2+)</name>
        <dbReference type="ChEBI" id="CHEBI:29105"/>
    </ligand>
</feature>
<feature type="binding site" evidence="1">
    <location>
        <position position="237"/>
    </location>
    <ligand>
        <name>Zn(2+)</name>
        <dbReference type="ChEBI" id="CHEBI:29105"/>
    </ligand>
</feature>
<feature type="binding site" evidence="1">
    <location>
        <position position="268"/>
    </location>
    <ligand>
        <name>ATP</name>
        <dbReference type="ChEBI" id="CHEBI:30616"/>
    </ligand>
</feature>
<accession>C4XSW5</accession>
<comment type="catalytic activity">
    <reaction evidence="1">
        <text>tRNA(Cys) + L-cysteine + ATP = L-cysteinyl-tRNA(Cys) + AMP + diphosphate</text>
        <dbReference type="Rhea" id="RHEA:17773"/>
        <dbReference type="Rhea" id="RHEA-COMP:9661"/>
        <dbReference type="Rhea" id="RHEA-COMP:9679"/>
        <dbReference type="ChEBI" id="CHEBI:30616"/>
        <dbReference type="ChEBI" id="CHEBI:33019"/>
        <dbReference type="ChEBI" id="CHEBI:35235"/>
        <dbReference type="ChEBI" id="CHEBI:78442"/>
        <dbReference type="ChEBI" id="CHEBI:78517"/>
        <dbReference type="ChEBI" id="CHEBI:456215"/>
        <dbReference type="EC" id="6.1.1.16"/>
    </reaction>
</comment>
<comment type="cofactor">
    <cofactor evidence="1">
        <name>Zn(2+)</name>
        <dbReference type="ChEBI" id="CHEBI:29105"/>
    </cofactor>
    <text evidence="1">Binds 1 zinc ion per subunit.</text>
</comment>
<comment type="subunit">
    <text evidence="1">Monomer.</text>
</comment>
<comment type="subcellular location">
    <subcellularLocation>
        <location evidence="1">Cytoplasm</location>
    </subcellularLocation>
</comment>
<comment type="similarity">
    <text evidence="1">Belongs to the class-I aminoacyl-tRNA synthetase family.</text>
</comment>
<organism>
    <name type="scientific">Solidesulfovibrio magneticus (strain ATCC 700980 / DSM 13731 / RS-1)</name>
    <name type="common">Desulfovibrio magneticus</name>
    <dbReference type="NCBI Taxonomy" id="573370"/>
    <lineage>
        <taxon>Bacteria</taxon>
        <taxon>Pseudomonadati</taxon>
        <taxon>Thermodesulfobacteriota</taxon>
        <taxon>Desulfovibrionia</taxon>
        <taxon>Desulfovibrionales</taxon>
        <taxon>Desulfovibrionaceae</taxon>
        <taxon>Solidesulfovibrio</taxon>
    </lineage>
</organism>
<evidence type="ECO:0000255" key="1">
    <source>
        <dbReference type="HAMAP-Rule" id="MF_00041"/>
    </source>
</evidence>
<gene>
    <name evidence="1" type="primary">cysS</name>
    <name type="ordered locus">DMR_23160</name>
</gene>
<dbReference type="EC" id="6.1.1.16" evidence="1"/>
<dbReference type="EMBL" id="AP010904">
    <property type="protein sequence ID" value="BAH75807.1"/>
    <property type="molecule type" value="Genomic_DNA"/>
</dbReference>
<dbReference type="RefSeq" id="WP_015860989.1">
    <property type="nucleotide sequence ID" value="NC_012796.1"/>
</dbReference>
<dbReference type="SMR" id="C4XSW5"/>
<dbReference type="STRING" id="573370.DMR_23160"/>
<dbReference type="KEGG" id="dma:DMR_23160"/>
<dbReference type="eggNOG" id="COG0215">
    <property type="taxonomic scope" value="Bacteria"/>
</dbReference>
<dbReference type="HOGENOM" id="CLU_013528_0_1_7"/>
<dbReference type="OrthoDB" id="9815130at2"/>
<dbReference type="Proteomes" id="UP000009071">
    <property type="component" value="Chromosome"/>
</dbReference>
<dbReference type="GO" id="GO:0005829">
    <property type="term" value="C:cytosol"/>
    <property type="evidence" value="ECO:0007669"/>
    <property type="project" value="TreeGrafter"/>
</dbReference>
<dbReference type="GO" id="GO:0005524">
    <property type="term" value="F:ATP binding"/>
    <property type="evidence" value="ECO:0007669"/>
    <property type="project" value="UniProtKB-UniRule"/>
</dbReference>
<dbReference type="GO" id="GO:0004817">
    <property type="term" value="F:cysteine-tRNA ligase activity"/>
    <property type="evidence" value="ECO:0007669"/>
    <property type="project" value="UniProtKB-UniRule"/>
</dbReference>
<dbReference type="GO" id="GO:0008270">
    <property type="term" value="F:zinc ion binding"/>
    <property type="evidence" value="ECO:0007669"/>
    <property type="project" value="UniProtKB-UniRule"/>
</dbReference>
<dbReference type="GO" id="GO:0006423">
    <property type="term" value="P:cysteinyl-tRNA aminoacylation"/>
    <property type="evidence" value="ECO:0007669"/>
    <property type="project" value="UniProtKB-UniRule"/>
</dbReference>
<dbReference type="CDD" id="cd00672">
    <property type="entry name" value="CysRS_core"/>
    <property type="match status" value="1"/>
</dbReference>
<dbReference type="FunFam" id="3.40.50.620:FF:000009">
    <property type="entry name" value="Cysteine--tRNA ligase"/>
    <property type="match status" value="1"/>
</dbReference>
<dbReference type="Gene3D" id="1.20.120.1910">
    <property type="entry name" value="Cysteine-tRNA ligase, C-terminal anti-codon recognition domain"/>
    <property type="match status" value="1"/>
</dbReference>
<dbReference type="Gene3D" id="3.40.50.620">
    <property type="entry name" value="HUPs"/>
    <property type="match status" value="1"/>
</dbReference>
<dbReference type="HAMAP" id="MF_00041">
    <property type="entry name" value="Cys_tRNA_synth"/>
    <property type="match status" value="1"/>
</dbReference>
<dbReference type="InterPro" id="IPR015803">
    <property type="entry name" value="Cys-tRNA-ligase"/>
</dbReference>
<dbReference type="InterPro" id="IPR015273">
    <property type="entry name" value="Cys-tRNA-synt_Ia_DALR"/>
</dbReference>
<dbReference type="InterPro" id="IPR024909">
    <property type="entry name" value="Cys-tRNA/MSH_ligase"/>
</dbReference>
<dbReference type="InterPro" id="IPR056411">
    <property type="entry name" value="CysS_C"/>
</dbReference>
<dbReference type="InterPro" id="IPR014729">
    <property type="entry name" value="Rossmann-like_a/b/a_fold"/>
</dbReference>
<dbReference type="InterPro" id="IPR032678">
    <property type="entry name" value="tRNA-synt_1_cat_dom"/>
</dbReference>
<dbReference type="InterPro" id="IPR009080">
    <property type="entry name" value="tRNAsynth_Ia_anticodon-bd"/>
</dbReference>
<dbReference type="NCBIfam" id="TIGR00435">
    <property type="entry name" value="cysS"/>
    <property type="match status" value="1"/>
</dbReference>
<dbReference type="PANTHER" id="PTHR10890:SF3">
    <property type="entry name" value="CYSTEINE--TRNA LIGASE, CYTOPLASMIC"/>
    <property type="match status" value="1"/>
</dbReference>
<dbReference type="PANTHER" id="PTHR10890">
    <property type="entry name" value="CYSTEINYL-TRNA SYNTHETASE"/>
    <property type="match status" value="1"/>
</dbReference>
<dbReference type="Pfam" id="PF23493">
    <property type="entry name" value="CysS_C"/>
    <property type="match status" value="1"/>
</dbReference>
<dbReference type="Pfam" id="PF09190">
    <property type="entry name" value="DALR_2"/>
    <property type="match status" value="1"/>
</dbReference>
<dbReference type="Pfam" id="PF01406">
    <property type="entry name" value="tRNA-synt_1e"/>
    <property type="match status" value="1"/>
</dbReference>
<dbReference type="PRINTS" id="PR00983">
    <property type="entry name" value="TRNASYNTHCYS"/>
</dbReference>
<dbReference type="SMART" id="SM00840">
    <property type="entry name" value="DALR_2"/>
    <property type="match status" value="1"/>
</dbReference>
<dbReference type="SUPFAM" id="SSF47323">
    <property type="entry name" value="Anticodon-binding domain of a subclass of class I aminoacyl-tRNA synthetases"/>
    <property type="match status" value="1"/>
</dbReference>
<dbReference type="SUPFAM" id="SSF52374">
    <property type="entry name" value="Nucleotidylyl transferase"/>
    <property type="match status" value="1"/>
</dbReference>
<protein>
    <recommendedName>
        <fullName evidence="1">Cysteine--tRNA ligase</fullName>
        <ecNumber evidence="1">6.1.1.16</ecNumber>
    </recommendedName>
    <alternativeName>
        <fullName evidence="1">Cysteinyl-tRNA synthetase</fullName>
        <shortName evidence="1">CysRS</shortName>
    </alternativeName>
</protein>